<proteinExistence type="evidence at transcript level"/>
<keyword id="KW-0963">Cytoplasm</keyword>
<keyword id="KW-0378">Hydrolase</keyword>
<keyword id="KW-0479">Metal-binding</keyword>
<keyword id="KW-0539">Nucleus</keyword>
<keyword id="KW-1185">Reference proteome</keyword>
<keyword id="KW-0677">Repeat</keyword>
<keyword id="KW-0862">Zinc</keyword>
<gene>
    <name type="primary">CDADC1</name>
</gene>
<protein>
    <recommendedName>
        <fullName>Cytidine and dCMP deaminase domain-containing protein 1</fullName>
        <ecNumber evidence="1">3.5.4.5</ecNumber>
    </recommendedName>
    <alternativeName>
        <fullName evidence="5">Cytidine deaminase</fullName>
    </alternativeName>
</protein>
<organism>
    <name type="scientific">Pongo abelii</name>
    <name type="common">Sumatran orangutan</name>
    <name type="synonym">Pongo pygmaeus abelii</name>
    <dbReference type="NCBI Taxonomy" id="9601"/>
    <lineage>
        <taxon>Eukaryota</taxon>
        <taxon>Metazoa</taxon>
        <taxon>Chordata</taxon>
        <taxon>Craniata</taxon>
        <taxon>Vertebrata</taxon>
        <taxon>Euteleostomi</taxon>
        <taxon>Mammalia</taxon>
        <taxon>Eutheria</taxon>
        <taxon>Euarchontoglires</taxon>
        <taxon>Primates</taxon>
        <taxon>Haplorrhini</taxon>
        <taxon>Catarrhini</taxon>
        <taxon>Hominidae</taxon>
        <taxon>Pongo</taxon>
    </lineage>
</organism>
<evidence type="ECO:0000250" key="1">
    <source>
        <dbReference type="UniProtKB" id="Q9BWV3"/>
    </source>
</evidence>
<evidence type="ECO:0000250" key="2">
    <source>
        <dbReference type="UniProtKB" id="Q9GZX7"/>
    </source>
</evidence>
<evidence type="ECO:0000255" key="3">
    <source>
        <dbReference type="PROSITE-ProRule" id="PRU01083"/>
    </source>
</evidence>
<evidence type="ECO:0000256" key="4">
    <source>
        <dbReference type="SAM" id="MobiDB-lite"/>
    </source>
</evidence>
<evidence type="ECO:0000305" key="5"/>
<reference key="1">
    <citation type="submission" date="2004-11" db="EMBL/GenBank/DDBJ databases">
        <authorList>
            <consortium name="The German cDNA consortium"/>
        </authorList>
    </citation>
    <scope>NUCLEOTIDE SEQUENCE [LARGE SCALE MRNA]</scope>
    <source>
        <tissue>Kidney</tissue>
    </source>
</reference>
<comment type="function">
    <text evidence="1">Catalyzes the deamination of cytidine and deoxycytidine into uridine and deoxyuridine, respectively. May play an important role in testicular development and spermatogenesis.</text>
</comment>
<comment type="catalytic activity">
    <reaction evidence="1">
        <text>2'-deoxycytidine + H2O + H(+) = 2'-deoxyuridine + NH4(+)</text>
        <dbReference type="Rhea" id="RHEA:13433"/>
        <dbReference type="ChEBI" id="CHEBI:15377"/>
        <dbReference type="ChEBI" id="CHEBI:15378"/>
        <dbReference type="ChEBI" id="CHEBI:15698"/>
        <dbReference type="ChEBI" id="CHEBI:16450"/>
        <dbReference type="ChEBI" id="CHEBI:28938"/>
        <dbReference type="EC" id="3.5.4.5"/>
    </reaction>
</comment>
<comment type="catalytic activity">
    <reaction evidence="1">
        <text>cytidine + H2O + H(+) = uridine + NH4(+)</text>
        <dbReference type="Rhea" id="RHEA:16069"/>
        <dbReference type="ChEBI" id="CHEBI:15377"/>
        <dbReference type="ChEBI" id="CHEBI:15378"/>
        <dbReference type="ChEBI" id="CHEBI:16704"/>
        <dbReference type="ChEBI" id="CHEBI:17562"/>
        <dbReference type="ChEBI" id="CHEBI:28938"/>
        <dbReference type="EC" id="3.5.4.5"/>
    </reaction>
</comment>
<comment type="cofactor">
    <cofactor evidence="2">
        <name>Zn(2+)</name>
        <dbReference type="ChEBI" id="CHEBI:29105"/>
    </cofactor>
</comment>
<comment type="subcellular location">
    <subcellularLocation>
        <location evidence="1">Cytoplasm</location>
    </subcellularLocation>
    <subcellularLocation>
        <location evidence="1">Nucleus</location>
    </subcellularLocation>
</comment>
<comment type="similarity">
    <text evidence="5">Belongs to the cytidine and deoxycytidylate deaminase family.</text>
</comment>
<feature type="chain" id="PRO_0000300494" description="Cytidine and dCMP deaminase domain-containing protein 1">
    <location>
        <begin position="1"/>
        <end position="515"/>
    </location>
</feature>
<feature type="domain" description="CMP/dCMP-type deaminase 1" evidence="3">
    <location>
        <begin position="71"/>
        <end position="169"/>
    </location>
</feature>
<feature type="domain" description="CMP/dCMP-type deaminase 2" evidence="3">
    <location>
        <begin position="318"/>
        <end position="483"/>
    </location>
</feature>
<feature type="region of interest" description="Disordered" evidence="4">
    <location>
        <begin position="1"/>
        <end position="27"/>
    </location>
</feature>
<feature type="region of interest" description="Disordered" evidence="4">
    <location>
        <begin position="56"/>
        <end position="83"/>
    </location>
</feature>
<feature type="region of interest" description="Disordered" evidence="4">
    <location>
        <begin position="494"/>
        <end position="515"/>
    </location>
</feature>
<feature type="short sequence motif" description="Nuclear export signal" evidence="1">
    <location>
        <begin position="272"/>
        <end position="284"/>
    </location>
</feature>
<feature type="short sequence motif" description="Bipartite nuclear localization signal" evidence="1">
    <location>
        <begin position="489"/>
        <end position="511"/>
    </location>
</feature>
<feature type="compositionally biased region" description="Polar residues" evidence="4">
    <location>
        <begin position="1"/>
        <end position="11"/>
    </location>
</feature>
<feature type="compositionally biased region" description="Polar residues" evidence="4">
    <location>
        <begin position="18"/>
        <end position="27"/>
    </location>
</feature>
<feature type="compositionally biased region" description="Basic and acidic residues" evidence="4">
    <location>
        <begin position="60"/>
        <end position="83"/>
    </location>
</feature>
<feature type="active site" description="Proton donor" evidence="3">
    <location>
        <position position="401"/>
    </location>
</feature>
<feature type="binding site" evidence="3">
    <location>
        <position position="110"/>
    </location>
    <ligand>
        <name>Zn(2+)</name>
        <dbReference type="ChEBI" id="CHEBI:29105"/>
        <label>1</label>
    </ligand>
</feature>
<feature type="binding site" evidence="3">
    <location>
        <position position="135"/>
    </location>
    <ligand>
        <name>Zn(2+)</name>
        <dbReference type="ChEBI" id="CHEBI:29105"/>
        <label>1</label>
    </ligand>
</feature>
<feature type="binding site" evidence="3">
    <location>
        <position position="138"/>
    </location>
    <ligand>
        <name>Zn(2+)</name>
        <dbReference type="ChEBI" id="CHEBI:29105"/>
        <label>1</label>
    </ligand>
</feature>
<feature type="binding site" evidence="3">
    <location>
        <position position="399"/>
    </location>
    <ligand>
        <name>Zn(2+)</name>
        <dbReference type="ChEBI" id="CHEBI:29105"/>
        <label>2</label>
        <note>catalytic</note>
    </ligand>
</feature>
<feature type="binding site" evidence="3">
    <location>
        <position position="427"/>
    </location>
    <ligand>
        <name>Zn(2+)</name>
        <dbReference type="ChEBI" id="CHEBI:29105"/>
        <label>2</label>
        <note>catalytic</note>
    </ligand>
</feature>
<feature type="binding site" evidence="3">
    <location>
        <position position="430"/>
    </location>
    <ligand>
        <name>Zn(2+)</name>
        <dbReference type="ChEBI" id="CHEBI:29105"/>
        <label>2</label>
        <note>catalytic</note>
    </ligand>
</feature>
<accession>Q5RAX4</accession>
<dbReference type="EC" id="3.5.4.5" evidence="1"/>
<dbReference type="EMBL" id="CR858887">
    <property type="protein sequence ID" value="CAH91086.1"/>
    <property type="molecule type" value="mRNA"/>
</dbReference>
<dbReference type="RefSeq" id="NP_001125631.1">
    <property type="nucleotide sequence ID" value="NM_001132159.1"/>
</dbReference>
<dbReference type="SMR" id="Q5RAX4"/>
<dbReference type="FunCoup" id="Q5RAX4">
    <property type="interactions" value="2263"/>
</dbReference>
<dbReference type="STRING" id="9601.ENSPPYP00000006113"/>
<dbReference type="GeneID" id="100172549"/>
<dbReference type="KEGG" id="pon:100172549"/>
<dbReference type="CTD" id="81602"/>
<dbReference type="eggNOG" id="KOG3127">
    <property type="taxonomic scope" value="Eukaryota"/>
</dbReference>
<dbReference type="InParanoid" id="Q5RAX4"/>
<dbReference type="OrthoDB" id="6710946at2759"/>
<dbReference type="Proteomes" id="UP000001595">
    <property type="component" value="Unplaced"/>
</dbReference>
<dbReference type="GO" id="GO:0005737">
    <property type="term" value="C:cytoplasm"/>
    <property type="evidence" value="ECO:0007669"/>
    <property type="project" value="UniProtKB-SubCell"/>
</dbReference>
<dbReference type="GO" id="GO:0005634">
    <property type="term" value="C:nucleus"/>
    <property type="evidence" value="ECO:0007669"/>
    <property type="project" value="UniProtKB-SubCell"/>
</dbReference>
<dbReference type="GO" id="GO:0004126">
    <property type="term" value="F:cytidine deaminase activity"/>
    <property type="evidence" value="ECO:0007669"/>
    <property type="project" value="UniProtKB-EC"/>
</dbReference>
<dbReference type="GO" id="GO:0004132">
    <property type="term" value="F:dCMP deaminase activity"/>
    <property type="evidence" value="ECO:0007669"/>
    <property type="project" value="TreeGrafter"/>
</dbReference>
<dbReference type="GO" id="GO:0008270">
    <property type="term" value="F:zinc ion binding"/>
    <property type="evidence" value="ECO:0007669"/>
    <property type="project" value="InterPro"/>
</dbReference>
<dbReference type="GO" id="GO:0009972">
    <property type="term" value="P:cytidine deamination"/>
    <property type="evidence" value="ECO:0007669"/>
    <property type="project" value="TreeGrafter"/>
</dbReference>
<dbReference type="CDD" id="cd01286">
    <property type="entry name" value="deoxycytidylate_deaminase"/>
    <property type="match status" value="1"/>
</dbReference>
<dbReference type="FunFam" id="3.40.140.10:FF:000028">
    <property type="entry name" value="Cytidine and dCMP deaminase domain containing 1"/>
    <property type="match status" value="1"/>
</dbReference>
<dbReference type="FunFam" id="3.40.140.10:FF:000030">
    <property type="entry name" value="Cytidine and dCMP deaminase domain-containing protein 1"/>
    <property type="match status" value="1"/>
</dbReference>
<dbReference type="Gene3D" id="3.40.140.10">
    <property type="entry name" value="Cytidine Deaminase, domain 2"/>
    <property type="match status" value="2"/>
</dbReference>
<dbReference type="InterPro" id="IPR016192">
    <property type="entry name" value="APOBEC/CMP_deaminase_Zn-bd"/>
</dbReference>
<dbReference type="InterPro" id="IPR002125">
    <property type="entry name" value="CMP_dCMP_dom"/>
</dbReference>
<dbReference type="InterPro" id="IPR016193">
    <property type="entry name" value="Cytidine_deaminase-like"/>
</dbReference>
<dbReference type="InterPro" id="IPR015517">
    <property type="entry name" value="dCMP_deaminase-rel"/>
</dbReference>
<dbReference type="InterPro" id="IPR035105">
    <property type="entry name" value="Deoxycytidylate_deaminase_dom"/>
</dbReference>
<dbReference type="PANTHER" id="PTHR11086:SF14">
    <property type="entry name" value="CYTIDINE AND DCMP DEAMINASE DOMAIN-CONTAINING PROTEIN 1"/>
    <property type="match status" value="1"/>
</dbReference>
<dbReference type="PANTHER" id="PTHR11086">
    <property type="entry name" value="DEOXYCYTIDYLATE DEAMINASE-RELATED"/>
    <property type="match status" value="1"/>
</dbReference>
<dbReference type="Pfam" id="PF00383">
    <property type="entry name" value="dCMP_cyt_deam_1"/>
    <property type="match status" value="2"/>
</dbReference>
<dbReference type="SUPFAM" id="SSF53927">
    <property type="entry name" value="Cytidine deaminase-like"/>
    <property type="match status" value="2"/>
</dbReference>
<dbReference type="PROSITE" id="PS00903">
    <property type="entry name" value="CYT_DCMP_DEAMINASES_1"/>
    <property type="match status" value="1"/>
</dbReference>
<dbReference type="PROSITE" id="PS51747">
    <property type="entry name" value="CYT_DCMP_DEAMINASES_2"/>
    <property type="match status" value="2"/>
</dbReference>
<name>CDAC1_PONAB</name>
<sequence>MKEAGQMQNLESARAGRSVSTQTGSMTGQIPRLSKVNLFTLLSLWMELFPAVEAQRQKSQKNEEGKHGPLGDNEEMTRVSTDKRQVKRTGLVVVKNMKIVGLHCSSEDLHAGQIALIKHGSRLKNCDLYFSRKPCSACLKMIVNAGVNRISYWPADPEISLLTEASSSEDAKLDAKAVERLKSNSRAHVCVLLQPLVCYMVQFVEETSYKCDFIQKITKTLPDANTDFYYERKQERIKEYEMLFLVSNEEMHKQILMTIGLENLCENPYFSNLRQNMKDLILLLATVASSVPNFKHFGFYRSNPEQINEIHNQSLPQEIARHCMVQARLLAYRTEDHKTGVGAVIWAEGKSRSCDGTGAMYFVGCGYNAFPVGSEYADFPHMDDKQKDREIRKFRYIIHAERNALTFRCQEIKPEERSMIFVTKCPCDECVPLIKGAGIKQIYAGDVDVGKKKADISYMRFGELEGVSKFTWQLNPSGAYGLEQNEPERRENGVLRPVPQKEEQHQDKKLCLGIH</sequence>